<name>GBPA_SHEON</name>
<keyword id="KW-0147">Chitin-binding</keyword>
<keyword id="KW-1185">Reference proteome</keyword>
<keyword id="KW-0964">Secreted</keyword>
<keyword id="KW-0732">Signal</keyword>
<sequence>MPKLTQLSLVTLALTAGSTLVSQTASAHGYVVSPESRSYACKTGSNVNCGAVQWEPQSVEGASGFPESGPADGKIASAANGAFSPLDEQSPSRWSKRDIKSGWNDFSWQFTANHVTRNWRYYLTRQGWDQNQPLSRASFDLAPFCVIDGGMVQPPKLVTHNCYVPEDRSGYQVILAVWEVGDTTNSFYNAIDVNFSSGAVVPGEWTDIGDINPSLDLKAGDKVMTRVFDANGEQSAKQTQITIADATQGAKQNWPFLLASAINAQQPQLKAGQKNAAGVISPVYGKNEIFAAPKSGLERVEVSFDIAPAPGNQLNVTSLADDYTIVDGAAQVSFDVSTNADMQVSAYLFSHDGTAAGYVTQAVNNTSASLVLDVVAPKAGHYHLQVKAEPKQGEVIQQNFDLFLKDQATAPDADFIFPEGIKSYVAGTKVLQPKTGKVYQCKPWPYNGYCVQWSPTATGFEPGIGNSWTMAWTEL</sequence>
<accession>Q8EHY2</accession>
<comment type="function">
    <text evidence="1">Probably interacts with GlcNAc residues. May promote attachment to both epithelial cell surfaces and chitin.</text>
</comment>
<comment type="subcellular location">
    <subcellularLocation>
        <location evidence="1">Secreted</location>
    </subcellularLocation>
</comment>
<comment type="similarity">
    <text evidence="1">Belongs to the GbpA family.</text>
</comment>
<comment type="sequence caution" evidence="2">
    <conflict type="erroneous initiation">
        <sequence resource="EMBL-CDS" id="AAN54144"/>
    </conflict>
</comment>
<feature type="signal peptide" evidence="1">
    <location>
        <begin position="1"/>
        <end position="27"/>
    </location>
</feature>
<feature type="chain" id="PRO_0000229722" description="GlcNAc-binding protein A">
    <location>
        <begin position="28"/>
        <end position="475"/>
    </location>
</feature>
<feature type="domain" description="Chitin-binding type-4" evidence="1">
    <location>
        <begin position="28"/>
        <end position="195"/>
    </location>
</feature>
<feature type="domain" description="Chitin-binding type-3" evidence="1">
    <location>
        <begin position="426"/>
        <end position="468"/>
    </location>
</feature>
<protein>
    <recommendedName>
        <fullName evidence="1">GlcNAc-binding protein A</fullName>
    </recommendedName>
</protein>
<gene>
    <name evidence="1" type="primary">gbpA</name>
    <name type="ordered locus">SO_1072</name>
</gene>
<organism>
    <name type="scientific">Shewanella oneidensis (strain ATCC 700550 / JCM 31522 / CIP 106686 / LMG 19005 / NCIMB 14063 / MR-1)</name>
    <dbReference type="NCBI Taxonomy" id="211586"/>
    <lineage>
        <taxon>Bacteria</taxon>
        <taxon>Pseudomonadati</taxon>
        <taxon>Pseudomonadota</taxon>
        <taxon>Gammaproteobacteria</taxon>
        <taxon>Alteromonadales</taxon>
        <taxon>Shewanellaceae</taxon>
        <taxon>Shewanella</taxon>
    </lineage>
</organism>
<reference key="1">
    <citation type="journal article" date="2002" name="Nat. Biotechnol.">
        <title>Genome sequence of the dissimilatory metal ion-reducing bacterium Shewanella oneidensis.</title>
        <authorList>
            <person name="Heidelberg J.F."/>
            <person name="Paulsen I.T."/>
            <person name="Nelson K.E."/>
            <person name="Gaidos E.J."/>
            <person name="Nelson W.C."/>
            <person name="Read T.D."/>
            <person name="Eisen J.A."/>
            <person name="Seshadri R."/>
            <person name="Ward N.L."/>
            <person name="Methe B.A."/>
            <person name="Clayton R.A."/>
            <person name="Meyer T."/>
            <person name="Tsapin A."/>
            <person name="Scott J."/>
            <person name="Beanan M.J."/>
            <person name="Brinkac L.M."/>
            <person name="Daugherty S.C."/>
            <person name="DeBoy R.T."/>
            <person name="Dodson R.J."/>
            <person name="Durkin A.S."/>
            <person name="Haft D.H."/>
            <person name="Kolonay J.F."/>
            <person name="Madupu R."/>
            <person name="Peterson J.D."/>
            <person name="Umayam L.A."/>
            <person name="White O."/>
            <person name="Wolf A.M."/>
            <person name="Vamathevan J.J."/>
            <person name="Weidman J.F."/>
            <person name="Impraim M."/>
            <person name="Lee K."/>
            <person name="Berry K.J."/>
            <person name="Lee C."/>
            <person name="Mueller J."/>
            <person name="Khouri H.M."/>
            <person name="Gill J."/>
            <person name="Utterback T.R."/>
            <person name="McDonald L.A."/>
            <person name="Feldblyum T.V."/>
            <person name="Smith H.O."/>
            <person name="Venter J.C."/>
            <person name="Nealson K.H."/>
            <person name="Fraser C.M."/>
        </authorList>
    </citation>
    <scope>NUCLEOTIDE SEQUENCE [LARGE SCALE GENOMIC DNA]</scope>
    <source>
        <strain>ATCC 700550 / JCM 31522 / CIP 106686 / LMG 19005 / NCIMB 14063 / MR-1</strain>
    </source>
</reference>
<evidence type="ECO:0000255" key="1">
    <source>
        <dbReference type="HAMAP-Rule" id="MF_01905"/>
    </source>
</evidence>
<evidence type="ECO:0000305" key="2"/>
<proteinExistence type="inferred from homology"/>
<dbReference type="EMBL" id="AE014299">
    <property type="protein sequence ID" value="AAN54144.1"/>
    <property type="status" value="ALT_INIT"/>
    <property type="molecule type" value="Genomic_DNA"/>
</dbReference>
<dbReference type="RefSeq" id="NP_716699.1">
    <property type="nucleotide sequence ID" value="NC_004347.2"/>
</dbReference>
<dbReference type="RefSeq" id="WP_011071326.1">
    <property type="nucleotide sequence ID" value="NZ_CP053946.1"/>
</dbReference>
<dbReference type="SMR" id="Q8EHY2"/>
<dbReference type="STRING" id="211586.SO_1072"/>
<dbReference type="CAZy" id="AA10">
    <property type="family name" value="Auxiliary Activities 10"/>
</dbReference>
<dbReference type="CAZy" id="CBM73">
    <property type="family name" value="Carbohydrate-Binding Module Family 73"/>
</dbReference>
<dbReference type="PaxDb" id="211586-SO_1072"/>
<dbReference type="KEGG" id="son:SO_1072"/>
<dbReference type="PATRIC" id="fig|211586.12.peg.1029"/>
<dbReference type="eggNOG" id="COG3397">
    <property type="taxonomic scope" value="Bacteria"/>
</dbReference>
<dbReference type="HOGENOM" id="CLU_039396_2_0_6"/>
<dbReference type="OrthoDB" id="3675244at2"/>
<dbReference type="Proteomes" id="UP000008186">
    <property type="component" value="Chromosome"/>
</dbReference>
<dbReference type="GO" id="GO:0005576">
    <property type="term" value="C:extracellular region"/>
    <property type="evidence" value="ECO:0007669"/>
    <property type="project" value="UniProtKB-SubCell"/>
</dbReference>
<dbReference type="GO" id="GO:0008061">
    <property type="term" value="F:chitin binding"/>
    <property type="evidence" value="ECO:0007669"/>
    <property type="project" value="UniProtKB-UniRule"/>
</dbReference>
<dbReference type="CDD" id="cd21177">
    <property type="entry name" value="LPMO_AA10"/>
    <property type="match status" value="1"/>
</dbReference>
<dbReference type="FunFam" id="2.70.50.50:FF:000001">
    <property type="entry name" value="Chitin-binding protein"/>
    <property type="match status" value="1"/>
</dbReference>
<dbReference type="FunFam" id="2.60.40.2550:FF:000001">
    <property type="entry name" value="GlcNAc-binding protein A"/>
    <property type="match status" value="1"/>
</dbReference>
<dbReference type="Gene3D" id="2.60.40.2550">
    <property type="match status" value="1"/>
</dbReference>
<dbReference type="Gene3D" id="3.30.70.2150">
    <property type="match status" value="1"/>
</dbReference>
<dbReference type="Gene3D" id="2.70.50.50">
    <property type="entry name" value="chitin-binding protein cbp21"/>
    <property type="match status" value="1"/>
</dbReference>
<dbReference type="HAMAP" id="MF_01905">
    <property type="entry name" value="GbpA"/>
    <property type="match status" value="1"/>
</dbReference>
<dbReference type="InterPro" id="IPR004302">
    <property type="entry name" value="Cellulose/chitin-bd_N"/>
</dbReference>
<dbReference type="InterPro" id="IPR041029">
    <property type="entry name" value="GbpA_2"/>
</dbReference>
<dbReference type="InterPro" id="IPR054063">
    <property type="entry name" value="GbpA_D3"/>
</dbReference>
<dbReference type="InterPro" id="IPR020879">
    <property type="entry name" value="GlcNAc-bd_A"/>
</dbReference>
<dbReference type="InterPro" id="IPR051024">
    <property type="entry name" value="GlcNAc_Chitin_IntDeg"/>
</dbReference>
<dbReference type="InterPro" id="IPR014756">
    <property type="entry name" value="Ig_E-set"/>
</dbReference>
<dbReference type="NCBIfam" id="NF009690">
    <property type="entry name" value="PRK13211.1"/>
    <property type="match status" value="1"/>
</dbReference>
<dbReference type="PANTHER" id="PTHR34823:SF1">
    <property type="entry name" value="CHITIN-BINDING TYPE-4 DOMAIN-CONTAINING PROTEIN"/>
    <property type="match status" value="1"/>
</dbReference>
<dbReference type="PANTHER" id="PTHR34823">
    <property type="entry name" value="GLCNAC-BINDING PROTEIN A"/>
    <property type="match status" value="1"/>
</dbReference>
<dbReference type="Pfam" id="PF18416">
    <property type="entry name" value="GbpA_2"/>
    <property type="match status" value="1"/>
</dbReference>
<dbReference type="Pfam" id="PF21868">
    <property type="entry name" value="GbpA_D3"/>
    <property type="match status" value="1"/>
</dbReference>
<dbReference type="Pfam" id="PF03067">
    <property type="entry name" value="LPMO_10"/>
    <property type="match status" value="1"/>
</dbReference>
<dbReference type="SUPFAM" id="SSF81296">
    <property type="entry name" value="E set domains"/>
    <property type="match status" value="1"/>
</dbReference>